<gene>
    <name evidence="2" type="primary">infB</name>
    <name type="ordered locus">LAR_0672</name>
</gene>
<sequence length="752" mass="83538">MAKERIYELAKELKMPSKDLVNMANRQGMGVKSHMSSVTPDQAQQLRQLAKGGQKTTNNQHQPVKKNDGHNKQNNHQAQNHNQHHDHDKTQNERPQKKNNSRSNNGTKDNNQHQNNGGRFGGSLNNDQGRNGKRFNKKNKKNKKHNKNKRLREVAHKQPTQRKDKPLPEVLEYTDGMNAQDLGKILHRSPAEIVKKLFMLGVMINQNQSLDKDTIELLATDYGIEAKEKVQVDVSDIDKMFEDEQNNTEHQVTRPAVVTVMGHVDHGKTTLLDKLRHSHVTEHEAGGITQEIGAYQVHYNDQLITFLDTPGHAAFTEMRARGANITDITVLVVAADDGVMPQTVEAIHHAQAAQTPIIVAVNKIDKPGANPDRVTEELAKYNLIPEDWGGDTIFVKISAKFGKNLDELLDMILLQAEMLELKANPDQNAAGSVVEARLDQGRGSVATVLVQQGTLHVGDPIVVGNTFGRVRTMTNENGRRIKEATPSTPVEITGLNEVPEAGDRFVVFDDEKTARAAGEERAKRAMDKERQKTSHVTLDNLFATMKKGQMKTLPIIIKADVQGSVEALSQSLQKIKVDGVRVDIIHQAVGAINQSDVTLAEASNAVIIGFNVRPTAVAKTLADSNSIDIRLHRVIYDAIEEVEDAMKGMLEPVYKEETIGQVEVRQIYKASKVGTIAGGMVTSGKITRDAKVRLVRDGVVIYEGELGSLKRFKDDVKEVKQGYECGLTIENYNDIKEMDVIEAYKMKEVPVK</sequence>
<proteinExistence type="inferred from homology"/>
<reference key="1">
    <citation type="journal article" date="2008" name="DNA Res.">
        <title>Comparative genome analysis of Lactobacillus reuteri and Lactobacillus fermentum reveal a genomic island for reuterin and cobalamin production.</title>
        <authorList>
            <person name="Morita H."/>
            <person name="Toh H."/>
            <person name="Fukuda S."/>
            <person name="Horikawa H."/>
            <person name="Oshima K."/>
            <person name="Suzuki T."/>
            <person name="Murakami M."/>
            <person name="Hisamatsu S."/>
            <person name="Kato Y."/>
            <person name="Takizawa T."/>
            <person name="Fukuoka H."/>
            <person name="Yoshimura T."/>
            <person name="Itoh K."/>
            <person name="O'Sullivan D.J."/>
            <person name="McKay L.L."/>
            <person name="Ohno H."/>
            <person name="Kikuchi J."/>
            <person name="Masaoka T."/>
            <person name="Hattori M."/>
        </authorList>
    </citation>
    <scope>NUCLEOTIDE SEQUENCE [LARGE SCALE GENOMIC DNA]</scope>
    <source>
        <strain>JCM 1112</strain>
    </source>
</reference>
<dbReference type="EMBL" id="AP007281">
    <property type="protein sequence ID" value="BAG25188.1"/>
    <property type="molecule type" value="Genomic_DNA"/>
</dbReference>
<dbReference type="RefSeq" id="WP_003668181.1">
    <property type="nucleotide sequence ID" value="NC_010609.1"/>
</dbReference>
<dbReference type="SMR" id="B2G6V6"/>
<dbReference type="GeneID" id="77190754"/>
<dbReference type="KEGG" id="lrf:LAR_0672"/>
<dbReference type="HOGENOM" id="CLU_006301_5_1_9"/>
<dbReference type="GO" id="GO:0005829">
    <property type="term" value="C:cytosol"/>
    <property type="evidence" value="ECO:0007669"/>
    <property type="project" value="TreeGrafter"/>
</dbReference>
<dbReference type="GO" id="GO:0005525">
    <property type="term" value="F:GTP binding"/>
    <property type="evidence" value="ECO:0007669"/>
    <property type="project" value="UniProtKB-KW"/>
</dbReference>
<dbReference type="GO" id="GO:0003924">
    <property type="term" value="F:GTPase activity"/>
    <property type="evidence" value="ECO:0007669"/>
    <property type="project" value="UniProtKB-UniRule"/>
</dbReference>
<dbReference type="GO" id="GO:0003743">
    <property type="term" value="F:translation initiation factor activity"/>
    <property type="evidence" value="ECO:0007669"/>
    <property type="project" value="UniProtKB-UniRule"/>
</dbReference>
<dbReference type="CDD" id="cd01887">
    <property type="entry name" value="IF2_eIF5B"/>
    <property type="match status" value="1"/>
</dbReference>
<dbReference type="CDD" id="cd03702">
    <property type="entry name" value="IF2_mtIF2_II"/>
    <property type="match status" value="1"/>
</dbReference>
<dbReference type="CDD" id="cd03692">
    <property type="entry name" value="mtIF2_IVc"/>
    <property type="match status" value="1"/>
</dbReference>
<dbReference type="FunFam" id="2.40.30.10:FF:000007">
    <property type="entry name" value="Translation initiation factor IF-2"/>
    <property type="match status" value="1"/>
</dbReference>
<dbReference type="FunFam" id="2.40.30.10:FF:000008">
    <property type="entry name" value="Translation initiation factor IF-2"/>
    <property type="match status" value="1"/>
</dbReference>
<dbReference type="FunFam" id="3.40.50.10050:FF:000001">
    <property type="entry name" value="Translation initiation factor IF-2"/>
    <property type="match status" value="1"/>
</dbReference>
<dbReference type="FunFam" id="3.40.50.300:FF:000019">
    <property type="entry name" value="Translation initiation factor IF-2"/>
    <property type="match status" value="1"/>
</dbReference>
<dbReference type="Gene3D" id="1.10.10.2480">
    <property type="match status" value="1"/>
</dbReference>
<dbReference type="Gene3D" id="3.40.50.300">
    <property type="entry name" value="P-loop containing nucleotide triphosphate hydrolases"/>
    <property type="match status" value="1"/>
</dbReference>
<dbReference type="Gene3D" id="2.40.30.10">
    <property type="entry name" value="Translation factors"/>
    <property type="match status" value="2"/>
</dbReference>
<dbReference type="Gene3D" id="3.40.50.10050">
    <property type="entry name" value="Translation initiation factor IF- 2, domain 3"/>
    <property type="match status" value="1"/>
</dbReference>
<dbReference type="HAMAP" id="MF_00100_B">
    <property type="entry name" value="IF_2_B"/>
    <property type="match status" value="1"/>
</dbReference>
<dbReference type="InterPro" id="IPR053905">
    <property type="entry name" value="EF-G-like_DII"/>
</dbReference>
<dbReference type="InterPro" id="IPR004161">
    <property type="entry name" value="EFTu-like_2"/>
</dbReference>
<dbReference type="InterPro" id="IPR044145">
    <property type="entry name" value="IF2_II"/>
</dbReference>
<dbReference type="InterPro" id="IPR006847">
    <property type="entry name" value="IF2_N"/>
</dbReference>
<dbReference type="InterPro" id="IPR027417">
    <property type="entry name" value="P-loop_NTPase"/>
</dbReference>
<dbReference type="InterPro" id="IPR005225">
    <property type="entry name" value="Small_GTP-bd"/>
</dbReference>
<dbReference type="InterPro" id="IPR000795">
    <property type="entry name" value="T_Tr_GTP-bd_dom"/>
</dbReference>
<dbReference type="InterPro" id="IPR000178">
    <property type="entry name" value="TF_IF2_bacterial-like"/>
</dbReference>
<dbReference type="InterPro" id="IPR015760">
    <property type="entry name" value="TIF_IF2"/>
</dbReference>
<dbReference type="InterPro" id="IPR023115">
    <property type="entry name" value="TIF_IF2_dom3"/>
</dbReference>
<dbReference type="InterPro" id="IPR036925">
    <property type="entry name" value="TIF_IF2_dom3_sf"/>
</dbReference>
<dbReference type="InterPro" id="IPR009000">
    <property type="entry name" value="Transl_B-barrel_sf"/>
</dbReference>
<dbReference type="NCBIfam" id="TIGR00487">
    <property type="entry name" value="IF-2"/>
    <property type="match status" value="1"/>
</dbReference>
<dbReference type="NCBIfam" id="TIGR00231">
    <property type="entry name" value="small_GTP"/>
    <property type="match status" value="1"/>
</dbReference>
<dbReference type="PANTHER" id="PTHR43381:SF5">
    <property type="entry name" value="TR-TYPE G DOMAIN-CONTAINING PROTEIN"/>
    <property type="match status" value="1"/>
</dbReference>
<dbReference type="PANTHER" id="PTHR43381">
    <property type="entry name" value="TRANSLATION INITIATION FACTOR IF-2-RELATED"/>
    <property type="match status" value="1"/>
</dbReference>
<dbReference type="Pfam" id="PF22042">
    <property type="entry name" value="EF-G_D2"/>
    <property type="match status" value="1"/>
</dbReference>
<dbReference type="Pfam" id="PF00009">
    <property type="entry name" value="GTP_EFTU"/>
    <property type="match status" value="1"/>
</dbReference>
<dbReference type="Pfam" id="PF03144">
    <property type="entry name" value="GTP_EFTU_D2"/>
    <property type="match status" value="1"/>
</dbReference>
<dbReference type="Pfam" id="PF11987">
    <property type="entry name" value="IF-2"/>
    <property type="match status" value="1"/>
</dbReference>
<dbReference type="Pfam" id="PF04760">
    <property type="entry name" value="IF2_N"/>
    <property type="match status" value="2"/>
</dbReference>
<dbReference type="SUPFAM" id="SSF52156">
    <property type="entry name" value="Initiation factor IF2/eIF5b, domain 3"/>
    <property type="match status" value="1"/>
</dbReference>
<dbReference type="SUPFAM" id="SSF52540">
    <property type="entry name" value="P-loop containing nucleoside triphosphate hydrolases"/>
    <property type="match status" value="1"/>
</dbReference>
<dbReference type="SUPFAM" id="SSF50447">
    <property type="entry name" value="Translation proteins"/>
    <property type="match status" value="2"/>
</dbReference>
<dbReference type="PROSITE" id="PS51722">
    <property type="entry name" value="G_TR_2"/>
    <property type="match status" value="1"/>
</dbReference>
<dbReference type="PROSITE" id="PS01176">
    <property type="entry name" value="IF2"/>
    <property type="match status" value="1"/>
</dbReference>
<feature type="chain" id="PRO_1000093798" description="Translation initiation factor IF-2">
    <location>
        <begin position="1"/>
        <end position="752"/>
    </location>
</feature>
<feature type="domain" description="tr-type G">
    <location>
        <begin position="253"/>
        <end position="422"/>
    </location>
</feature>
<feature type="region of interest" description="Disordered" evidence="3">
    <location>
        <begin position="26"/>
        <end position="167"/>
    </location>
</feature>
<feature type="region of interest" description="G1" evidence="1">
    <location>
        <begin position="262"/>
        <end position="269"/>
    </location>
</feature>
<feature type="region of interest" description="G2" evidence="1">
    <location>
        <begin position="287"/>
        <end position="291"/>
    </location>
</feature>
<feature type="region of interest" description="G3" evidence="1">
    <location>
        <begin position="308"/>
        <end position="311"/>
    </location>
</feature>
<feature type="region of interest" description="G4" evidence="1">
    <location>
        <begin position="362"/>
        <end position="365"/>
    </location>
</feature>
<feature type="region of interest" description="G5" evidence="1">
    <location>
        <begin position="398"/>
        <end position="400"/>
    </location>
</feature>
<feature type="compositionally biased region" description="Polar residues" evidence="3">
    <location>
        <begin position="34"/>
        <end position="47"/>
    </location>
</feature>
<feature type="compositionally biased region" description="Low complexity" evidence="3">
    <location>
        <begin position="72"/>
        <end position="81"/>
    </location>
</feature>
<feature type="compositionally biased region" description="Basic and acidic residues" evidence="3">
    <location>
        <begin position="83"/>
        <end position="96"/>
    </location>
</feature>
<feature type="compositionally biased region" description="Polar residues" evidence="3">
    <location>
        <begin position="101"/>
        <end position="129"/>
    </location>
</feature>
<feature type="compositionally biased region" description="Basic residues" evidence="3">
    <location>
        <begin position="131"/>
        <end position="150"/>
    </location>
</feature>
<feature type="compositionally biased region" description="Basic and acidic residues" evidence="3">
    <location>
        <begin position="151"/>
        <end position="167"/>
    </location>
</feature>
<feature type="binding site" evidence="2">
    <location>
        <begin position="262"/>
        <end position="269"/>
    </location>
    <ligand>
        <name>GTP</name>
        <dbReference type="ChEBI" id="CHEBI:37565"/>
    </ligand>
</feature>
<feature type="binding site" evidence="2">
    <location>
        <begin position="308"/>
        <end position="312"/>
    </location>
    <ligand>
        <name>GTP</name>
        <dbReference type="ChEBI" id="CHEBI:37565"/>
    </ligand>
</feature>
<feature type="binding site" evidence="2">
    <location>
        <begin position="362"/>
        <end position="365"/>
    </location>
    <ligand>
        <name>GTP</name>
        <dbReference type="ChEBI" id="CHEBI:37565"/>
    </ligand>
</feature>
<keyword id="KW-0963">Cytoplasm</keyword>
<keyword id="KW-0342">GTP-binding</keyword>
<keyword id="KW-0396">Initiation factor</keyword>
<keyword id="KW-0547">Nucleotide-binding</keyword>
<keyword id="KW-0648">Protein biosynthesis</keyword>
<accession>B2G6V6</accession>
<comment type="function">
    <text evidence="2">One of the essential components for the initiation of protein synthesis. Protects formylmethionyl-tRNA from spontaneous hydrolysis and promotes its binding to the 30S ribosomal subunits. Also involved in the hydrolysis of GTP during the formation of the 70S ribosomal complex.</text>
</comment>
<comment type="subcellular location">
    <subcellularLocation>
        <location evidence="2">Cytoplasm</location>
    </subcellularLocation>
</comment>
<comment type="similarity">
    <text evidence="2">Belongs to the TRAFAC class translation factor GTPase superfamily. Classic translation factor GTPase family. IF-2 subfamily.</text>
</comment>
<evidence type="ECO:0000250" key="1"/>
<evidence type="ECO:0000255" key="2">
    <source>
        <dbReference type="HAMAP-Rule" id="MF_00100"/>
    </source>
</evidence>
<evidence type="ECO:0000256" key="3">
    <source>
        <dbReference type="SAM" id="MobiDB-lite"/>
    </source>
</evidence>
<organism>
    <name type="scientific">Limosilactobacillus reuteri subsp. reuteri (strain JCM 1112)</name>
    <name type="common">Lactobacillus reuteri</name>
    <dbReference type="NCBI Taxonomy" id="557433"/>
    <lineage>
        <taxon>Bacteria</taxon>
        <taxon>Bacillati</taxon>
        <taxon>Bacillota</taxon>
        <taxon>Bacilli</taxon>
        <taxon>Lactobacillales</taxon>
        <taxon>Lactobacillaceae</taxon>
        <taxon>Limosilactobacillus</taxon>
    </lineage>
</organism>
<protein>
    <recommendedName>
        <fullName evidence="2">Translation initiation factor IF-2</fullName>
    </recommendedName>
</protein>
<name>IF2_LIMRJ</name>